<feature type="propeptide" id="PRO_0000299981" evidence="1">
    <location>
        <begin position="1"/>
        <end position="2"/>
    </location>
</feature>
<feature type="chain" id="PRO_0000299982" description="Ribulose bisphosphate carboxylase large chain">
    <location>
        <begin position="3"/>
        <end position="475"/>
    </location>
</feature>
<feature type="active site" description="Proton acceptor" evidence="1">
    <location>
        <position position="175"/>
    </location>
</feature>
<feature type="active site" description="Proton acceptor" evidence="1">
    <location>
        <position position="294"/>
    </location>
</feature>
<feature type="binding site" description="in homodimeric partner" evidence="1">
    <location>
        <position position="123"/>
    </location>
    <ligand>
        <name>substrate</name>
    </ligand>
</feature>
<feature type="binding site" evidence="1">
    <location>
        <position position="173"/>
    </location>
    <ligand>
        <name>substrate</name>
    </ligand>
</feature>
<feature type="binding site" evidence="1">
    <location>
        <position position="177"/>
    </location>
    <ligand>
        <name>substrate</name>
    </ligand>
</feature>
<feature type="binding site" description="via carbamate group" evidence="1">
    <location>
        <position position="201"/>
    </location>
    <ligand>
        <name>Mg(2+)</name>
        <dbReference type="ChEBI" id="CHEBI:18420"/>
    </ligand>
</feature>
<feature type="binding site" evidence="1">
    <location>
        <position position="203"/>
    </location>
    <ligand>
        <name>Mg(2+)</name>
        <dbReference type="ChEBI" id="CHEBI:18420"/>
    </ligand>
</feature>
<feature type="binding site" evidence="1">
    <location>
        <position position="204"/>
    </location>
    <ligand>
        <name>Mg(2+)</name>
        <dbReference type="ChEBI" id="CHEBI:18420"/>
    </ligand>
</feature>
<feature type="binding site" evidence="1">
    <location>
        <position position="295"/>
    </location>
    <ligand>
        <name>substrate</name>
    </ligand>
</feature>
<feature type="binding site" evidence="1">
    <location>
        <position position="327"/>
    </location>
    <ligand>
        <name>substrate</name>
    </ligand>
</feature>
<feature type="binding site" evidence="1">
    <location>
        <position position="379"/>
    </location>
    <ligand>
        <name>substrate</name>
    </ligand>
</feature>
<feature type="site" description="Transition state stabilizer" evidence="1">
    <location>
        <position position="334"/>
    </location>
</feature>
<feature type="modified residue" description="N-acetylproline" evidence="1">
    <location>
        <position position="3"/>
    </location>
</feature>
<feature type="modified residue" description="N6,N6,N6-trimethyllysine" evidence="1">
    <location>
        <position position="14"/>
    </location>
</feature>
<feature type="modified residue" description="N6-carboxylysine" evidence="1">
    <location>
        <position position="201"/>
    </location>
</feature>
<feature type="disulfide bond" description="Interchain; in linked form" evidence="1">
    <location>
        <position position="247"/>
    </location>
</feature>
<name>RBL_ANGEV</name>
<evidence type="ECO:0000255" key="1">
    <source>
        <dbReference type="HAMAP-Rule" id="MF_01338"/>
    </source>
</evidence>
<sequence length="475" mass="52773">MSPQTETKTGFGFKAGVKDYRLNYYTPEYDTKDTDILAAFRMTPQPGVPPEEAGAAVAAESSTGTWTTVWTDGLTSLDRYKGRCYDIEPVAGEENQYIAYVAYPLDLFEEGSVTNMFTSIVGNVFGFKALRALRLEDLRIPPAYSKTFQGPPHGIQAERDKLNKYGRPLLGCTIKPKLGLSAKNYGRAVYECLRGGLDFTKDDENVNSQPFMRWRDRFLFVAEALFKSQAETGEVKGHYLNATAGTCEEMMKRAIFARELGAPIVMHDYLTGGFTANTSLAHYCRDNGLLLHIHRAMHAVIDRQRNHGMHFRVLAKALRMSGGDHVHAGTVVGKLEGEREVTLGFVDSLRDDYIEKDRSRGIYFTQDWVSMPGVFPVASGGIHVWHMPALTEIFGDDSVLQFGGGTLGHPWGNAPGAVANRVASEACVQARNEGRDLAREGNEIIREASKWSPELAAACEVWKEIKFEFETIDTL</sequence>
<gene>
    <name evidence="1" type="primary">rbcL</name>
</gene>
<accession>Q31680</accession>
<keyword id="KW-0007">Acetylation</keyword>
<keyword id="KW-0113">Calvin cycle</keyword>
<keyword id="KW-0120">Carbon dioxide fixation</keyword>
<keyword id="KW-0150">Chloroplast</keyword>
<keyword id="KW-1015">Disulfide bond</keyword>
<keyword id="KW-0456">Lyase</keyword>
<keyword id="KW-0460">Magnesium</keyword>
<keyword id="KW-0479">Metal-binding</keyword>
<keyword id="KW-0488">Methylation</keyword>
<keyword id="KW-0503">Monooxygenase</keyword>
<keyword id="KW-0560">Oxidoreductase</keyword>
<keyword id="KW-0601">Photorespiration</keyword>
<keyword id="KW-0602">Photosynthesis</keyword>
<keyword id="KW-0934">Plastid</keyword>
<reference key="1">
    <citation type="journal article" date="1994" name="Mol. Phylogenet. Evol.">
        <title>Phylogenetic analysis of green plant rbcL sequences.</title>
        <authorList>
            <person name="Manhart J.R."/>
        </authorList>
    </citation>
    <scope>NUCLEOTIDE SEQUENCE [GENOMIC DNA]</scope>
</reference>
<reference key="2">
    <citation type="journal article" date="1994" name="Gene">
        <title>Extensive sequence divergence in the 3' inverted repeat of the chloroplast rbcL gene in non-flowering land plants and algae.</title>
        <authorList>
            <person name="Calie P.J."/>
            <person name="Manhart J.R."/>
        </authorList>
    </citation>
    <scope>NUCLEOTIDE SEQUENCE [GENOMIC DNA]</scope>
</reference>
<reference key="3">
    <citation type="journal article" date="2007" name="Am. Fern J.">
        <title>The complete plastid genome sequence of Angiopteris evecta (G. Forst.) Hoffm. (Marattiaceae).</title>
        <authorList>
            <person name="Roper J.M."/>
            <person name="Hansen S.K."/>
            <person name="Wolf P.G."/>
            <person name="Karol K.G."/>
            <person name="Mandoli D.F."/>
            <person name="Everett K.D.E."/>
            <person name="Kuehl J.V."/>
            <person name="Boore J.L."/>
        </authorList>
    </citation>
    <scope>NUCLEOTIDE SEQUENCE [LARGE SCALE GENOMIC DNA]</scope>
</reference>
<proteinExistence type="inferred from homology"/>
<comment type="function">
    <text evidence="1">RuBisCO catalyzes two reactions: the carboxylation of D-ribulose 1,5-bisphosphate, the primary event in carbon dioxide fixation, as well as the oxidative fragmentation of the pentose substrate in the photorespiration process. Both reactions occur simultaneously and in competition at the same active site.</text>
</comment>
<comment type="catalytic activity">
    <reaction evidence="1">
        <text>2 (2R)-3-phosphoglycerate + 2 H(+) = D-ribulose 1,5-bisphosphate + CO2 + H2O</text>
        <dbReference type="Rhea" id="RHEA:23124"/>
        <dbReference type="ChEBI" id="CHEBI:15377"/>
        <dbReference type="ChEBI" id="CHEBI:15378"/>
        <dbReference type="ChEBI" id="CHEBI:16526"/>
        <dbReference type="ChEBI" id="CHEBI:57870"/>
        <dbReference type="ChEBI" id="CHEBI:58272"/>
        <dbReference type="EC" id="4.1.1.39"/>
    </reaction>
</comment>
<comment type="catalytic activity">
    <reaction evidence="1">
        <text>D-ribulose 1,5-bisphosphate + O2 = 2-phosphoglycolate + (2R)-3-phosphoglycerate + 2 H(+)</text>
        <dbReference type="Rhea" id="RHEA:36631"/>
        <dbReference type="ChEBI" id="CHEBI:15378"/>
        <dbReference type="ChEBI" id="CHEBI:15379"/>
        <dbReference type="ChEBI" id="CHEBI:57870"/>
        <dbReference type="ChEBI" id="CHEBI:58033"/>
        <dbReference type="ChEBI" id="CHEBI:58272"/>
    </reaction>
</comment>
<comment type="cofactor">
    <cofactor evidence="1">
        <name>Mg(2+)</name>
        <dbReference type="ChEBI" id="CHEBI:18420"/>
    </cofactor>
    <text evidence="1">Binds 1 Mg(2+) ion per subunit.</text>
</comment>
<comment type="subunit">
    <text evidence="1">Heterohexadecamer of 8 large chains and 8 small chains; disulfide-linked. The disulfide link is formed within the large subunit homodimers.</text>
</comment>
<comment type="subcellular location">
    <subcellularLocation>
        <location>Plastid</location>
        <location>Chloroplast</location>
    </subcellularLocation>
</comment>
<comment type="PTM">
    <text evidence="1">The disulfide bond which can form in the large chain dimeric partners within the hexadecamer appears to be associated with oxidative stress and protein turnover.</text>
</comment>
<comment type="miscellaneous">
    <text evidence="1">The basic functional RuBisCO is composed of a large chain homodimer in a 'head-to-tail' conformation. In form I RuBisCO this homodimer is arranged in a barrel-like tetramer with the small subunits forming a tetrameric 'cap' on each end of the 'barrel'.</text>
</comment>
<comment type="similarity">
    <text evidence="1">Belongs to the RuBisCO large chain family. Type I subfamily.</text>
</comment>
<dbReference type="EC" id="4.1.1.39" evidence="1"/>
<dbReference type="EMBL" id="L11052">
    <property type="protein sequence ID" value="AAA57237.1"/>
    <property type="molecule type" value="Genomic_DNA"/>
</dbReference>
<dbReference type="EMBL" id="DQ821119">
    <property type="protein sequence ID" value="ABG79608.1"/>
    <property type="molecule type" value="Genomic_DNA"/>
</dbReference>
<dbReference type="RefSeq" id="YP_001023709.1">
    <property type="nucleotide sequence ID" value="NC_008829.1"/>
</dbReference>
<dbReference type="SMR" id="Q31680"/>
<dbReference type="GeneID" id="4788262"/>
<dbReference type="GO" id="GO:0009507">
    <property type="term" value="C:chloroplast"/>
    <property type="evidence" value="ECO:0007669"/>
    <property type="project" value="UniProtKB-SubCell"/>
</dbReference>
<dbReference type="GO" id="GO:0000287">
    <property type="term" value="F:magnesium ion binding"/>
    <property type="evidence" value="ECO:0007669"/>
    <property type="project" value="UniProtKB-UniRule"/>
</dbReference>
<dbReference type="GO" id="GO:0004497">
    <property type="term" value="F:monooxygenase activity"/>
    <property type="evidence" value="ECO:0007669"/>
    <property type="project" value="UniProtKB-KW"/>
</dbReference>
<dbReference type="GO" id="GO:0016984">
    <property type="term" value="F:ribulose-bisphosphate carboxylase activity"/>
    <property type="evidence" value="ECO:0007669"/>
    <property type="project" value="UniProtKB-UniRule"/>
</dbReference>
<dbReference type="GO" id="GO:0009853">
    <property type="term" value="P:photorespiration"/>
    <property type="evidence" value="ECO:0007669"/>
    <property type="project" value="UniProtKB-KW"/>
</dbReference>
<dbReference type="GO" id="GO:0019253">
    <property type="term" value="P:reductive pentose-phosphate cycle"/>
    <property type="evidence" value="ECO:0007669"/>
    <property type="project" value="UniProtKB-UniRule"/>
</dbReference>
<dbReference type="CDD" id="cd08212">
    <property type="entry name" value="RuBisCO_large_I"/>
    <property type="match status" value="1"/>
</dbReference>
<dbReference type="FunFam" id="3.20.20.110:FF:000001">
    <property type="entry name" value="Ribulose bisphosphate carboxylase large chain"/>
    <property type="match status" value="1"/>
</dbReference>
<dbReference type="FunFam" id="3.30.70.150:FF:000001">
    <property type="entry name" value="Ribulose bisphosphate carboxylase large chain"/>
    <property type="match status" value="1"/>
</dbReference>
<dbReference type="Gene3D" id="3.20.20.110">
    <property type="entry name" value="Ribulose bisphosphate carboxylase, large subunit, C-terminal domain"/>
    <property type="match status" value="1"/>
</dbReference>
<dbReference type="Gene3D" id="3.30.70.150">
    <property type="entry name" value="RuBisCO large subunit, N-terminal domain"/>
    <property type="match status" value="1"/>
</dbReference>
<dbReference type="HAMAP" id="MF_01338">
    <property type="entry name" value="RuBisCO_L_type1"/>
    <property type="match status" value="1"/>
</dbReference>
<dbReference type="InterPro" id="IPR033966">
    <property type="entry name" value="RuBisCO"/>
</dbReference>
<dbReference type="InterPro" id="IPR020878">
    <property type="entry name" value="RuBisCo_large_chain_AS"/>
</dbReference>
<dbReference type="InterPro" id="IPR000685">
    <property type="entry name" value="RuBisCO_lsu_C"/>
</dbReference>
<dbReference type="InterPro" id="IPR036376">
    <property type="entry name" value="RuBisCO_lsu_C_sf"/>
</dbReference>
<dbReference type="InterPro" id="IPR017443">
    <property type="entry name" value="RuBisCO_lsu_fd_N"/>
</dbReference>
<dbReference type="InterPro" id="IPR036422">
    <property type="entry name" value="RuBisCO_lsu_N_sf"/>
</dbReference>
<dbReference type="InterPro" id="IPR020888">
    <property type="entry name" value="RuBisCO_lsuI"/>
</dbReference>
<dbReference type="NCBIfam" id="NF003252">
    <property type="entry name" value="PRK04208.1"/>
    <property type="match status" value="1"/>
</dbReference>
<dbReference type="PANTHER" id="PTHR42704">
    <property type="entry name" value="RIBULOSE BISPHOSPHATE CARBOXYLASE"/>
    <property type="match status" value="1"/>
</dbReference>
<dbReference type="PANTHER" id="PTHR42704:SF17">
    <property type="entry name" value="RIBULOSE BISPHOSPHATE CARBOXYLASE LARGE CHAIN"/>
    <property type="match status" value="1"/>
</dbReference>
<dbReference type="Pfam" id="PF00016">
    <property type="entry name" value="RuBisCO_large"/>
    <property type="match status" value="1"/>
</dbReference>
<dbReference type="Pfam" id="PF02788">
    <property type="entry name" value="RuBisCO_large_N"/>
    <property type="match status" value="1"/>
</dbReference>
<dbReference type="SFLD" id="SFLDG01052">
    <property type="entry name" value="RuBisCO"/>
    <property type="match status" value="1"/>
</dbReference>
<dbReference type="SFLD" id="SFLDS00014">
    <property type="entry name" value="RuBisCO"/>
    <property type="match status" value="1"/>
</dbReference>
<dbReference type="SFLD" id="SFLDG00301">
    <property type="entry name" value="RuBisCO-like_proteins"/>
    <property type="match status" value="1"/>
</dbReference>
<dbReference type="SUPFAM" id="SSF51649">
    <property type="entry name" value="RuBisCo, C-terminal domain"/>
    <property type="match status" value="1"/>
</dbReference>
<dbReference type="SUPFAM" id="SSF54966">
    <property type="entry name" value="RuBisCO, large subunit, small (N-terminal) domain"/>
    <property type="match status" value="1"/>
</dbReference>
<dbReference type="PROSITE" id="PS00157">
    <property type="entry name" value="RUBISCO_LARGE"/>
    <property type="match status" value="1"/>
</dbReference>
<organism>
    <name type="scientific">Angiopteris evecta</name>
    <name type="common">Mule's foot fern</name>
    <name type="synonym">Polypodium evectum</name>
    <dbReference type="NCBI Taxonomy" id="13825"/>
    <lineage>
        <taxon>Eukaryota</taxon>
        <taxon>Viridiplantae</taxon>
        <taxon>Streptophyta</taxon>
        <taxon>Embryophyta</taxon>
        <taxon>Tracheophyta</taxon>
        <taxon>Polypodiopsida</taxon>
        <taxon>Marattiidae</taxon>
        <taxon>Marattiales</taxon>
        <taxon>Marattiaceae</taxon>
        <taxon>Angiopteris</taxon>
    </lineage>
</organism>
<geneLocation type="chloroplast"/>
<protein>
    <recommendedName>
        <fullName evidence="1">Ribulose bisphosphate carboxylase large chain</fullName>
        <shortName evidence="1">RuBisCO large subunit</shortName>
        <ecNumber evidence="1">4.1.1.39</ecNumber>
    </recommendedName>
</protein>